<reference key="1">
    <citation type="journal article" date="2003" name="Proc. Natl. Acad. Sci. U.S.A.">
        <title>The complete genome sequence of the Arabidopsis and tomato pathogen Pseudomonas syringae pv. tomato DC3000.</title>
        <authorList>
            <person name="Buell C.R."/>
            <person name="Joardar V."/>
            <person name="Lindeberg M."/>
            <person name="Selengut J."/>
            <person name="Paulsen I.T."/>
            <person name="Gwinn M.L."/>
            <person name="Dodson R.J."/>
            <person name="DeBoy R.T."/>
            <person name="Durkin A.S."/>
            <person name="Kolonay J.F."/>
            <person name="Madupu R."/>
            <person name="Daugherty S.C."/>
            <person name="Brinkac L.M."/>
            <person name="Beanan M.J."/>
            <person name="Haft D.H."/>
            <person name="Nelson W.C."/>
            <person name="Davidsen T.M."/>
            <person name="Zafar N."/>
            <person name="Zhou L."/>
            <person name="Liu J."/>
            <person name="Yuan Q."/>
            <person name="Khouri H.M."/>
            <person name="Fedorova N.B."/>
            <person name="Tran B."/>
            <person name="Russell D."/>
            <person name="Berry K.J."/>
            <person name="Utterback T.R."/>
            <person name="Van Aken S.E."/>
            <person name="Feldblyum T.V."/>
            <person name="D'Ascenzo M."/>
            <person name="Deng W.-L."/>
            <person name="Ramos A.R."/>
            <person name="Alfano J.R."/>
            <person name="Cartinhour S."/>
            <person name="Chatterjee A.K."/>
            <person name="Delaney T.P."/>
            <person name="Lazarowitz S.G."/>
            <person name="Martin G.B."/>
            <person name="Schneider D.J."/>
            <person name="Tang X."/>
            <person name="Bender C.L."/>
            <person name="White O."/>
            <person name="Fraser C.M."/>
            <person name="Collmer A."/>
        </authorList>
    </citation>
    <scope>NUCLEOTIDE SEQUENCE [LARGE SCALE GENOMIC DNA]</scope>
    <source>
        <strain>ATCC BAA-871 / DC3000</strain>
    </source>
</reference>
<sequence>MKGLLQRVRSARVEVGTEVVGAIDQGILVLVGIEPQDTRASADKLLHKLLNYRVFSDADGKMNLSLREVSGGLLLVSQFTLAADTKSGLRAGFSKAAAPALGAELFDYLLSQARIAHPVVAAGQFGADMQVHLINDGPVTFLFET</sequence>
<feature type="chain" id="PRO_0000164576" description="D-aminoacyl-tRNA deacylase">
    <location>
        <begin position="1"/>
        <end position="145"/>
    </location>
</feature>
<feature type="short sequence motif" description="Gly-cisPro motif, important for rejection of L-amino acids" evidence="1">
    <location>
        <begin position="137"/>
        <end position="138"/>
    </location>
</feature>
<keyword id="KW-0963">Cytoplasm</keyword>
<keyword id="KW-0378">Hydrolase</keyword>
<keyword id="KW-1185">Reference proteome</keyword>
<keyword id="KW-0694">RNA-binding</keyword>
<keyword id="KW-0820">tRNA-binding</keyword>
<comment type="function">
    <text evidence="1">An aminoacyl-tRNA editing enzyme that deacylates mischarged D-aminoacyl-tRNAs. Also deacylates mischarged glycyl-tRNA(Ala), protecting cells against glycine mischarging by AlaRS. Acts via tRNA-based rather than protein-based catalysis; rejects L-amino acids rather than detecting D-amino acids in the active site. By recycling D-aminoacyl-tRNA to D-amino acids and free tRNA molecules, this enzyme counteracts the toxicity associated with the formation of D-aminoacyl-tRNA entities in vivo and helps enforce protein L-homochirality.</text>
</comment>
<comment type="catalytic activity">
    <reaction evidence="1">
        <text>glycyl-tRNA(Ala) + H2O = tRNA(Ala) + glycine + H(+)</text>
        <dbReference type="Rhea" id="RHEA:53744"/>
        <dbReference type="Rhea" id="RHEA-COMP:9657"/>
        <dbReference type="Rhea" id="RHEA-COMP:13640"/>
        <dbReference type="ChEBI" id="CHEBI:15377"/>
        <dbReference type="ChEBI" id="CHEBI:15378"/>
        <dbReference type="ChEBI" id="CHEBI:57305"/>
        <dbReference type="ChEBI" id="CHEBI:78442"/>
        <dbReference type="ChEBI" id="CHEBI:78522"/>
        <dbReference type="EC" id="3.1.1.96"/>
    </reaction>
</comment>
<comment type="catalytic activity">
    <reaction evidence="1">
        <text>a D-aminoacyl-tRNA + H2O = a tRNA + a D-alpha-amino acid + H(+)</text>
        <dbReference type="Rhea" id="RHEA:13953"/>
        <dbReference type="Rhea" id="RHEA-COMP:10123"/>
        <dbReference type="Rhea" id="RHEA-COMP:10124"/>
        <dbReference type="ChEBI" id="CHEBI:15377"/>
        <dbReference type="ChEBI" id="CHEBI:15378"/>
        <dbReference type="ChEBI" id="CHEBI:59871"/>
        <dbReference type="ChEBI" id="CHEBI:78442"/>
        <dbReference type="ChEBI" id="CHEBI:79333"/>
        <dbReference type="EC" id="3.1.1.96"/>
    </reaction>
</comment>
<comment type="subunit">
    <text evidence="1">Homodimer.</text>
</comment>
<comment type="subcellular location">
    <subcellularLocation>
        <location evidence="1">Cytoplasm</location>
    </subcellularLocation>
</comment>
<comment type="domain">
    <text evidence="1">A Gly-cisPro motif from one monomer fits into the active site of the other monomer to allow specific chiral rejection of L-amino acids.</text>
</comment>
<comment type="similarity">
    <text evidence="1">Belongs to the DTD family.</text>
</comment>
<name>DTD_PSESM</name>
<organism>
    <name type="scientific">Pseudomonas syringae pv. tomato (strain ATCC BAA-871 / DC3000)</name>
    <dbReference type="NCBI Taxonomy" id="223283"/>
    <lineage>
        <taxon>Bacteria</taxon>
        <taxon>Pseudomonadati</taxon>
        <taxon>Pseudomonadota</taxon>
        <taxon>Gammaproteobacteria</taxon>
        <taxon>Pseudomonadales</taxon>
        <taxon>Pseudomonadaceae</taxon>
        <taxon>Pseudomonas</taxon>
    </lineage>
</organism>
<evidence type="ECO:0000255" key="1">
    <source>
        <dbReference type="HAMAP-Rule" id="MF_00518"/>
    </source>
</evidence>
<gene>
    <name evidence="1" type="primary">dtd</name>
    <name type="ordered locus">PSPTO_5163</name>
</gene>
<protein>
    <recommendedName>
        <fullName evidence="1">D-aminoacyl-tRNA deacylase</fullName>
        <shortName evidence="1">DTD</shortName>
        <ecNumber evidence="1">3.1.1.96</ecNumber>
    </recommendedName>
    <alternativeName>
        <fullName evidence="1">Gly-tRNA(Ala) deacylase</fullName>
    </alternativeName>
</protein>
<accession>Q87UX9</accession>
<dbReference type="EC" id="3.1.1.96" evidence="1"/>
<dbReference type="EMBL" id="AE016853">
    <property type="protein sequence ID" value="AAO58589.1"/>
    <property type="molecule type" value="Genomic_DNA"/>
</dbReference>
<dbReference type="RefSeq" id="NP_794894.1">
    <property type="nucleotide sequence ID" value="NC_004578.1"/>
</dbReference>
<dbReference type="RefSeq" id="WP_005765550.1">
    <property type="nucleotide sequence ID" value="NC_004578.1"/>
</dbReference>
<dbReference type="SMR" id="Q87UX9"/>
<dbReference type="STRING" id="223283.PSPTO_5163"/>
<dbReference type="GeneID" id="61789520"/>
<dbReference type="KEGG" id="pst:PSPTO_5163"/>
<dbReference type="PATRIC" id="fig|223283.9.peg.5284"/>
<dbReference type="eggNOG" id="COG1490">
    <property type="taxonomic scope" value="Bacteria"/>
</dbReference>
<dbReference type="HOGENOM" id="CLU_076901_1_1_6"/>
<dbReference type="OrthoDB" id="9801395at2"/>
<dbReference type="PhylomeDB" id="Q87UX9"/>
<dbReference type="Proteomes" id="UP000002515">
    <property type="component" value="Chromosome"/>
</dbReference>
<dbReference type="GO" id="GO:0005737">
    <property type="term" value="C:cytoplasm"/>
    <property type="evidence" value="ECO:0007669"/>
    <property type="project" value="UniProtKB-SubCell"/>
</dbReference>
<dbReference type="GO" id="GO:0051500">
    <property type="term" value="F:D-tyrosyl-tRNA(Tyr) deacylase activity"/>
    <property type="evidence" value="ECO:0007669"/>
    <property type="project" value="TreeGrafter"/>
</dbReference>
<dbReference type="GO" id="GO:0106026">
    <property type="term" value="F:Gly-tRNA(Ala) deacylase activity"/>
    <property type="evidence" value="ECO:0007669"/>
    <property type="project" value="UniProtKB-UniRule"/>
</dbReference>
<dbReference type="GO" id="GO:0043908">
    <property type="term" value="F:Ser(Gly)-tRNA(Ala) hydrolase activity"/>
    <property type="evidence" value="ECO:0007669"/>
    <property type="project" value="UniProtKB-UniRule"/>
</dbReference>
<dbReference type="GO" id="GO:0000049">
    <property type="term" value="F:tRNA binding"/>
    <property type="evidence" value="ECO:0007669"/>
    <property type="project" value="UniProtKB-UniRule"/>
</dbReference>
<dbReference type="GO" id="GO:0019478">
    <property type="term" value="P:D-amino acid catabolic process"/>
    <property type="evidence" value="ECO:0007669"/>
    <property type="project" value="UniProtKB-UniRule"/>
</dbReference>
<dbReference type="FunFam" id="3.50.80.10:FF:000001">
    <property type="entry name" value="D-aminoacyl-tRNA deacylase"/>
    <property type="match status" value="1"/>
</dbReference>
<dbReference type="Gene3D" id="3.50.80.10">
    <property type="entry name" value="D-tyrosyl-tRNA(Tyr) deacylase"/>
    <property type="match status" value="1"/>
</dbReference>
<dbReference type="HAMAP" id="MF_00518">
    <property type="entry name" value="Deacylase_Dtd"/>
    <property type="match status" value="1"/>
</dbReference>
<dbReference type="InterPro" id="IPR003732">
    <property type="entry name" value="Daa-tRNA_deacyls_DTD"/>
</dbReference>
<dbReference type="InterPro" id="IPR023509">
    <property type="entry name" value="DTD-like_sf"/>
</dbReference>
<dbReference type="NCBIfam" id="TIGR00256">
    <property type="entry name" value="D-aminoacyl-tRNA deacylase"/>
    <property type="match status" value="1"/>
</dbReference>
<dbReference type="PANTHER" id="PTHR10472:SF5">
    <property type="entry name" value="D-AMINOACYL-TRNA DEACYLASE 1"/>
    <property type="match status" value="1"/>
</dbReference>
<dbReference type="PANTHER" id="PTHR10472">
    <property type="entry name" value="D-TYROSYL-TRNA TYR DEACYLASE"/>
    <property type="match status" value="1"/>
</dbReference>
<dbReference type="Pfam" id="PF02580">
    <property type="entry name" value="Tyr_Deacylase"/>
    <property type="match status" value="1"/>
</dbReference>
<dbReference type="SUPFAM" id="SSF69500">
    <property type="entry name" value="DTD-like"/>
    <property type="match status" value="1"/>
</dbReference>
<proteinExistence type="inferred from homology"/>